<protein>
    <recommendedName>
        <fullName evidence="1">GTPase Obg</fullName>
        <ecNumber evidence="1">3.6.5.-</ecNumber>
    </recommendedName>
    <alternativeName>
        <fullName evidence="1">GTP-binding protein Obg</fullName>
    </alternativeName>
</protein>
<sequence length="428" mass="47210">MFVDQVKIYVKGGDGGNGMVAYRREKYVPKGGPAGGDGGKGADVVFVVEEGLRTLMDFRYQRHFKADRGQHGMSKGQHGRKSEDLLVKVPPGTVVKDEKTGQILADLVTHGQTAVIAKGGRGGRGNSRFATATNPAPEIAENGEPGQERDVILELKVLADVGLVGFPSVGKSTLLSVVSSARPKIAEYHFTTIVPNLGVVETGDNRSFVMADLPGLIEGAHAGVGLGHQFLRHIERTRVIVHVIDMSGLEGRDPYEDYVTINNELKEYNLRLTERPQVVVANKMDMPDAEENLQAFKEKVGEEVKIFPISAVTRQGVRDLLFEVANLIETTPEFPIHEVADESDTSVMYKFDTEGVKFEITRESDGTFVISGYDIEKTFKMTDFSRDESVRRFARQMRGMGIDEALRARGAKDGDIVKILEYEFEFID</sequence>
<keyword id="KW-0963">Cytoplasm</keyword>
<keyword id="KW-0342">GTP-binding</keyword>
<keyword id="KW-0378">Hydrolase</keyword>
<keyword id="KW-0460">Magnesium</keyword>
<keyword id="KW-0479">Metal-binding</keyword>
<keyword id="KW-0547">Nucleotide-binding</keyword>
<feature type="chain" id="PRO_0000385720" description="GTPase Obg">
    <location>
        <begin position="1"/>
        <end position="428"/>
    </location>
</feature>
<feature type="domain" description="Obg" evidence="3">
    <location>
        <begin position="1"/>
        <end position="158"/>
    </location>
</feature>
<feature type="domain" description="OBG-type G" evidence="1">
    <location>
        <begin position="159"/>
        <end position="329"/>
    </location>
</feature>
<feature type="domain" description="OCT" evidence="2">
    <location>
        <begin position="350"/>
        <end position="428"/>
    </location>
</feature>
<feature type="binding site" evidence="1">
    <location>
        <begin position="165"/>
        <end position="172"/>
    </location>
    <ligand>
        <name>GTP</name>
        <dbReference type="ChEBI" id="CHEBI:37565"/>
    </ligand>
</feature>
<feature type="binding site" evidence="1">
    <location>
        <position position="172"/>
    </location>
    <ligand>
        <name>Mg(2+)</name>
        <dbReference type="ChEBI" id="CHEBI:18420"/>
    </ligand>
</feature>
<feature type="binding site" evidence="1">
    <location>
        <begin position="190"/>
        <end position="194"/>
    </location>
    <ligand>
        <name>GTP</name>
        <dbReference type="ChEBI" id="CHEBI:37565"/>
    </ligand>
</feature>
<feature type="binding site" evidence="1">
    <location>
        <position position="192"/>
    </location>
    <ligand>
        <name>Mg(2+)</name>
        <dbReference type="ChEBI" id="CHEBI:18420"/>
    </ligand>
</feature>
<feature type="binding site" evidence="1">
    <location>
        <begin position="212"/>
        <end position="215"/>
    </location>
    <ligand>
        <name>GTP</name>
        <dbReference type="ChEBI" id="CHEBI:37565"/>
    </ligand>
</feature>
<feature type="binding site" evidence="1">
    <location>
        <begin position="282"/>
        <end position="285"/>
    </location>
    <ligand>
        <name>GTP</name>
        <dbReference type="ChEBI" id="CHEBI:37565"/>
    </ligand>
</feature>
<feature type="binding site" evidence="1">
    <location>
        <begin position="310"/>
        <end position="312"/>
    </location>
    <ligand>
        <name>GTP</name>
        <dbReference type="ChEBI" id="CHEBI:37565"/>
    </ligand>
</feature>
<organism>
    <name type="scientific">Bacillus cereus (strain B4264)</name>
    <dbReference type="NCBI Taxonomy" id="405532"/>
    <lineage>
        <taxon>Bacteria</taxon>
        <taxon>Bacillati</taxon>
        <taxon>Bacillota</taxon>
        <taxon>Bacilli</taxon>
        <taxon>Bacillales</taxon>
        <taxon>Bacillaceae</taxon>
        <taxon>Bacillus</taxon>
        <taxon>Bacillus cereus group</taxon>
    </lineage>
</organism>
<reference key="1">
    <citation type="submission" date="2008-10" db="EMBL/GenBank/DDBJ databases">
        <title>Genome sequence of Bacillus cereus B4264.</title>
        <authorList>
            <person name="Dodson R.J."/>
            <person name="Durkin A.S."/>
            <person name="Rosovitz M.J."/>
            <person name="Rasko D.A."/>
            <person name="Hoffmaster A."/>
            <person name="Ravel J."/>
            <person name="Sutton G."/>
        </authorList>
    </citation>
    <scope>NUCLEOTIDE SEQUENCE [LARGE SCALE GENOMIC DNA]</scope>
    <source>
        <strain>B4264</strain>
    </source>
</reference>
<gene>
    <name evidence="1" type="primary">obg</name>
    <name type="ordered locus">BCB4264_A4558</name>
</gene>
<comment type="function">
    <text evidence="1">An essential GTPase which binds GTP, GDP and possibly (p)ppGpp with moderate affinity, with high nucleotide exchange rates and a fairly low GTP hydrolysis rate. Plays a role in control of the cell cycle, stress response, ribosome biogenesis and in those bacteria that undergo differentiation, in morphogenesis control.</text>
</comment>
<comment type="cofactor">
    <cofactor evidence="1">
        <name>Mg(2+)</name>
        <dbReference type="ChEBI" id="CHEBI:18420"/>
    </cofactor>
</comment>
<comment type="subunit">
    <text evidence="1">Monomer.</text>
</comment>
<comment type="subcellular location">
    <subcellularLocation>
        <location evidence="1">Cytoplasm</location>
    </subcellularLocation>
</comment>
<comment type="similarity">
    <text evidence="1">Belongs to the TRAFAC class OBG-HflX-like GTPase superfamily. OBG GTPase family.</text>
</comment>
<accession>B7HE73</accession>
<name>OBG_BACC4</name>
<evidence type="ECO:0000255" key="1">
    <source>
        <dbReference type="HAMAP-Rule" id="MF_01454"/>
    </source>
</evidence>
<evidence type="ECO:0000255" key="2">
    <source>
        <dbReference type="PROSITE-ProRule" id="PRU01229"/>
    </source>
</evidence>
<evidence type="ECO:0000255" key="3">
    <source>
        <dbReference type="PROSITE-ProRule" id="PRU01231"/>
    </source>
</evidence>
<proteinExistence type="inferred from homology"/>
<dbReference type="EC" id="3.6.5.-" evidence="1"/>
<dbReference type="EMBL" id="CP001176">
    <property type="protein sequence ID" value="ACK62384.1"/>
    <property type="molecule type" value="Genomic_DNA"/>
</dbReference>
<dbReference type="RefSeq" id="WP_000497129.1">
    <property type="nucleotide sequence ID" value="NC_011725.1"/>
</dbReference>
<dbReference type="SMR" id="B7HE73"/>
<dbReference type="KEGG" id="bcb:BCB4264_A4558"/>
<dbReference type="HOGENOM" id="CLU_011747_2_1_9"/>
<dbReference type="Proteomes" id="UP000007096">
    <property type="component" value="Chromosome"/>
</dbReference>
<dbReference type="GO" id="GO:0005737">
    <property type="term" value="C:cytoplasm"/>
    <property type="evidence" value="ECO:0007669"/>
    <property type="project" value="UniProtKB-SubCell"/>
</dbReference>
<dbReference type="GO" id="GO:0005525">
    <property type="term" value="F:GTP binding"/>
    <property type="evidence" value="ECO:0007669"/>
    <property type="project" value="UniProtKB-UniRule"/>
</dbReference>
<dbReference type="GO" id="GO:0003924">
    <property type="term" value="F:GTPase activity"/>
    <property type="evidence" value="ECO:0007669"/>
    <property type="project" value="UniProtKB-UniRule"/>
</dbReference>
<dbReference type="GO" id="GO:0000287">
    <property type="term" value="F:magnesium ion binding"/>
    <property type="evidence" value="ECO:0007669"/>
    <property type="project" value="InterPro"/>
</dbReference>
<dbReference type="GO" id="GO:0042254">
    <property type="term" value="P:ribosome biogenesis"/>
    <property type="evidence" value="ECO:0007669"/>
    <property type="project" value="UniProtKB-UniRule"/>
</dbReference>
<dbReference type="CDD" id="cd01898">
    <property type="entry name" value="Obg"/>
    <property type="match status" value="1"/>
</dbReference>
<dbReference type="FunFam" id="2.70.210.12:FF:000001">
    <property type="entry name" value="GTPase Obg"/>
    <property type="match status" value="1"/>
</dbReference>
<dbReference type="FunFam" id="3.40.50.300:FF:000515">
    <property type="entry name" value="GTPase Obg"/>
    <property type="match status" value="1"/>
</dbReference>
<dbReference type="Gene3D" id="3.30.300.350">
    <property type="entry name" value="GTP-binding protein OBG, C-terminal domain"/>
    <property type="match status" value="1"/>
</dbReference>
<dbReference type="Gene3D" id="2.70.210.12">
    <property type="entry name" value="GTP1/OBG domain"/>
    <property type="match status" value="1"/>
</dbReference>
<dbReference type="Gene3D" id="3.40.50.300">
    <property type="entry name" value="P-loop containing nucleotide triphosphate hydrolases"/>
    <property type="match status" value="1"/>
</dbReference>
<dbReference type="HAMAP" id="MF_01454">
    <property type="entry name" value="GTPase_Obg"/>
    <property type="match status" value="1"/>
</dbReference>
<dbReference type="InterPro" id="IPR031167">
    <property type="entry name" value="G_OBG"/>
</dbReference>
<dbReference type="InterPro" id="IPR006073">
    <property type="entry name" value="GTP-bd"/>
</dbReference>
<dbReference type="InterPro" id="IPR014100">
    <property type="entry name" value="GTP-bd_Obg/CgtA"/>
</dbReference>
<dbReference type="InterPro" id="IPR036346">
    <property type="entry name" value="GTP-bd_prot_GTP1/OBG_C_sf"/>
</dbReference>
<dbReference type="InterPro" id="IPR006074">
    <property type="entry name" value="GTP1-OBG_CS"/>
</dbReference>
<dbReference type="InterPro" id="IPR006169">
    <property type="entry name" value="GTP1_OBG_dom"/>
</dbReference>
<dbReference type="InterPro" id="IPR036726">
    <property type="entry name" value="GTP1_OBG_dom_sf"/>
</dbReference>
<dbReference type="InterPro" id="IPR045086">
    <property type="entry name" value="OBG_GTPase"/>
</dbReference>
<dbReference type="InterPro" id="IPR015349">
    <property type="entry name" value="OCT_dom"/>
</dbReference>
<dbReference type="InterPro" id="IPR027417">
    <property type="entry name" value="P-loop_NTPase"/>
</dbReference>
<dbReference type="InterPro" id="IPR005225">
    <property type="entry name" value="Small_GTP-bd"/>
</dbReference>
<dbReference type="NCBIfam" id="TIGR02729">
    <property type="entry name" value="Obg_CgtA"/>
    <property type="match status" value="1"/>
</dbReference>
<dbReference type="NCBIfam" id="TIGR03595">
    <property type="entry name" value="Obg_CgtA_exten"/>
    <property type="match status" value="1"/>
</dbReference>
<dbReference type="NCBIfam" id="NF008954">
    <property type="entry name" value="PRK12296.1"/>
    <property type="match status" value="1"/>
</dbReference>
<dbReference type="NCBIfam" id="NF008955">
    <property type="entry name" value="PRK12297.1"/>
    <property type="match status" value="1"/>
</dbReference>
<dbReference type="NCBIfam" id="NF008956">
    <property type="entry name" value="PRK12299.1"/>
    <property type="match status" value="1"/>
</dbReference>
<dbReference type="NCBIfam" id="TIGR00231">
    <property type="entry name" value="small_GTP"/>
    <property type="match status" value="1"/>
</dbReference>
<dbReference type="PANTHER" id="PTHR11702">
    <property type="entry name" value="DEVELOPMENTALLY REGULATED GTP-BINDING PROTEIN-RELATED"/>
    <property type="match status" value="1"/>
</dbReference>
<dbReference type="PANTHER" id="PTHR11702:SF31">
    <property type="entry name" value="MITOCHONDRIAL RIBOSOME-ASSOCIATED GTPASE 2"/>
    <property type="match status" value="1"/>
</dbReference>
<dbReference type="Pfam" id="PF09269">
    <property type="entry name" value="DUF1967"/>
    <property type="match status" value="1"/>
</dbReference>
<dbReference type="Pfam" id="PF01018">
    <property type="entry name" value="GTP1_OBG"/>
    <property type="match status" value="1"/>
</dbReference>
<dbReference type="Pfam" id="PF01926">
    <property type="entry name" value="MMR_HSR1"/>
    <property type="match status" value="1"/>
</dbReference>
<dbReference type="PIRSF" id="PIRSF002401">
    <property type="entry name" value="GTP_bd_Obg/CgtA"/>
    <property type="match status" value="1"/>
</dbReference>
<dbReference type="PRINTS" id="PR00326">
    <property type="entry name" value="GTP1OBG"/>
</dbReference>
<dbReference type="SUPFAM" id="SSF102741">
    <property type="entry name" value="Obg GTP-binding protein C-terminal domain"/>
    <property type="match status" value="1"/>
</dbReference>
<dbReference type="SUPFAM" id="SSF82051">
    <property type="entry name" value="Obg GTP-binding protein N-terminal domain"/>
    <property type="match status" value="1"/>
</dbReference>
<dbReference type="SUPFAM" id="SSF52540">
    <property type="entry name" value="P-loop containing nucleoside triphosphate hydrolases"/>
    <property type="match status" value="1"/>
</dbReference>
<dbReference type="PROSITE" id="PS51710">
    <property type="entry name" value="G_OBG"/>
    <property type="match status" value="1"/>
</dbReference>
<dbReference type="PROSITE" id="PS00905">
    <property type="entry name" value="GTP1_OBG"/>
    <property type="match status" value="1"/>
</dbReference>
<dbReference type="PROSITE" id="PS51883">
    <property type="entry name" value="OBG"/>
    <property type="match status" value="1"/>
</dbReference>
<dbReference type="PROSITE" id="PS51881">
    <property type="entry name" value="OCT"/>
    <property type="match status" value="1"/>
</dbReference>